<name>PURA_YERPY</name>
<gene>
    <name evidence="1" type="primary">purA</name>
    <name type="ordered locus">YPK_3793</name>
</gene>
<comment type="function">
    <text evidence="1">Plays an important role in the de novo pathway of purine nucleotide biosynthesis. Catalyzes the first committed step in the biosynthesis of AMP from IMP.</text>
</comment>
<comment type="catalytic activity">
    <reaction evidence="1">
        <text>IMP + L-aspartate + GTP = N(6)-(1,2-dicarboxyethyl)-AMP + GDP + phosphate + 2 H(+)</text>
        <dbReference type="Rhea" id="RHEA:15753"/>
        <dbReference type="ChEBI" id="CHEBI:15378"/>
        <dbReference type="ChEBI" id="CHEBI:29991"/>
        <dbReference type="ChEBI" id="CHEBI:37565"/>
        <dbReference type="ChEBI" id="CHEBI:43474"/>
        <dbReference type="ChEBI" id="CHEBI:57567"/>
        <dbReference type="ChEBI" id="CHEBI:58053"/>
        <dbReference type="ChEBI" id="CHEBI:58189"/>
        <dbReference type="EC" id="6.3.4.4"/>
    </reaction>
</comment>
<comment type="cofactor">
    <cofactor evidence="1">
        <name>Mg(2+)</name>
        <dbReference type="ChEBI" id="CHEBI:18420"/>
    </cofactor>
    <text evidence="1">Binds 1 Mg(2+) ion per subunit.</text>
</comment>
<comment type="pathway">
    <text evidence="1">Purine metabolism; AMP biosynthesis via de novo pathway; AMP from IMP: step 1/2.</text>
</comment>
<comment type="subunit">
    <text evidence="1">Homodimer.</text>
</comment>
<comment type="subcellular location">
    <subcellularLocation>
        <location evidence="1">Cytoplasm</location>
    </subcellularLocation>
</comment>
<comment type="similarity">
    <text evidence="1">Belongs to the adenylosuccinate synthetase family.</text>
</comment>
<accession>B1JMN3</accession>
<sequence>MGKNVVVLGTQWGDEGKGKVVDLLTERAKYVVRYQGGHNAGHTLVINGEKTVLHLIPSGILRENVISIIGNGVVLAPDALMKEMTELEARGVPVRERLLLSEACPLILPYHVALDNAREKARGAKAIGTTGRGIGPAYEDKVARRGLRVSDLFNKETFAIKLKEIVEYHNFQLVHYYKEAAVDYQKVLDDVLAIADILTAMVVDVSELLDNARKQGELIMFEGAQGTLLDIDHGTYPYVTSSNTTAGGVATGSGLGPRYVDYVLGIVKAYSTRVGAGPFPTELNDETGEFLRKQGNEYGATTGRSRRTGWLDIVAVRRAVQINSLSGFCMTKLDVLDGLKEVKLCVGYRMPDGREVDTTPLAAEGWEGIEPIYETMPGWSETTFGVKEHSKLPQAALNYIQRVEELTGVPIDIISTGPDRDETMILRDPFDA</sequence>
<feature type="chain" id="PRO_1000089358" description="Adenylosuccinate synthetase">
    <location>
        <begin position="1"/>
        <end position="432"/>
    </location>
</feature>
<feature type="active site" description="Proton acceptor" evidence="1">
    <location>
        <position position="14"/>
    </location>
</feature>
<feature type="active site" description="Proton donor" evidence="1">
    <location>
        <position position="42"/>
    </location>
</feature>
<feature type="binding site" evidence="1">
    <location>
        <begin position="13"/>
        <end position="19"/>
    </location>
    <ligand>
        <name>GTP</name>
        <dbReference type="ChEBI" id="CHEBI:37565"/>
    </ligand>
</feature>
<feature type="binding site" description="in other chain" evidence="1">
    <location>
        <begin position="14"/>
        <end position="17"/>
    </location>
    <ligand>
        <name>IMP</name>
        <dbReference type="ChEBI" id="CHEBI:58053"/>
        <note>ligand shared between dimeric partners</note>
    </ligand>
</feature>
<feature type="binding site" evidence="1">
    <location>
        <position position="14"/>
    </location>
    <ligand>
        <name>Mg(2+)</name>
        <dbReference type="ChEBI" id="CHEBI:18420"/>
    </ligand>
</feature>
<feature type="binding site" description="in other chain" evidence="1">
    <location>
        <begin position="39"/>
        <end position="42"/>
    </location>
    <ligand>
        <name>IMP</name>
        <dbReference type="ChEBI" id="CHEBI:58053"/>
        <note>ligand shared between dimeric partners</note>
    </ligand>
</feature>
<feature type="binding site" evidence="1">
    <location>
        <begin position="41"/>
        <end position="43"/>
    </location>
    <ligand>
        <name>GTP</name>
        <dbReference type="ChEBI" id="CHEBI:37565"/>
    </ligand>
</feature>
<feature type="binding site" evidence="1">
    <location>
        <position position="41"/>
    </location>
    <ligand>
        <name>Mg(2+)</name>
        <dbReference type="ChEBI" id="CHEBI:18420"/>
    </ligand>
</feature>
<feature type="binding site" description="in other chain" evidence="1">
    <location>
        <position position="130"/>
    </location>
    <ligand>
        <name>IMP</name>
        <dbReference type="ChEBI" id="CHEBI:58053"/>
        <note>ligand shared between dimeric partners</note>
    </ligand>
</feature>
<feature type="binding site" evidence="1">
    <location>
        <position position="144"/>
    </location>
    <ligand>
        <name>IMP</name>
        <dbReference type="ChEBI" id="CHEBI:58053"/>
        <note>ligand shared between dimeric partners</note>
    </ligand>
</feature>
<feature type="binding site" description="in other chain" evidence="1">
    <location>
        <position position="225"/>
    </location>
    <ligand>
        <name>IMP</name>
        <dbReference type="ChEBI" id="CHEBI:58053"/>
        <note>ligand shared between dimeric partners</note>
    </ligand>
</feature>
<feature type="binding site" description="in other chain" evidence="1">
    <location>
        <position position="240"/>
    </location>
    <ligand>
        <name>IMP</name>
        <dbReference type="ChEBI" id="CHEBI:58053"/>
        <note>ligand shared between dimeric partners</note>
    </ligand>
</feature>
<feature type="binding site" evidence="1">
    <location>
        <begin position="300"/>
        <end position="306"/>
    </location>
    <ligand>
        <name>substrate</name>
    </ligand>
</feature>
<feature type="binding site" description="in other chain" evidence="1">
    <location>
        <position position="304"/>
    </location>
    <ligand>
        <name>IMP</name>
        <dbReference type="ChEBI" id="CHEBI:58053"/>
        <note>ligand shared between dimeric partners</note>
    </ligand>
</feature>
<feature type="binding site" evidence="1">
    <location>
        <position position="306"/>
    </location>
    <ligand>
        <name>GTP</name>
        <dbReference type="ChEBI" id="CHEBI:37565"/>
    </ligand>
</feature>
<feature type="binding site" evidence="1">
    <location>
        <begin position="332"/>
        <end position="334"/>
    </location>
    <ligand>
        <name>GTP</name>
        <dbReference type="ChEBI" id="CHEBI:37565"/>
    </ligand>
</feature>
<feature type="binding site" evidence="1">
    <location>
        <begin position="415"/>
        <end position="417"/>
    </location>
    <ligand>
        <name>GTP</name>
        <dbReference type="ChEBI" id="CHEBI:37565"/>
    </ligand>
</feature>
<proteinExistence type="inferred from homology"/>
<protein>
    <recommendedName>
        <fullName evidence="1">Adenylosuccinate synthetase</fullName>
        <shortName evidence="1">AMPSase</shortName>
        <shortName evidence="1">AdSS</shortName>
        <ecNumber evidence="1">6.3.4.4</ecNumber>
    </recommendedName>
    <alternativeName>
        <fullName evidence="1">IMP--aspartate ligase</fullName>
    </alternativeName>
</protein>
<reference key="1">
    <citation type="submission" date="2008-02" db="EMBL/GenBank/DDBJ databases">
        <title>Complete sequence of Yersinia pseudotuberculosis YPIII.</title>
        <authorList>
            <consortium name="US DOE Joint Genome Institute"/>
            <person name="Copeland A."/>
            <person name="Lucas S."/>
            <person name="Lapidus A."/>
            <person name="Glavina del Rio T."/>
            <person name="Dalin E."/>
            <person name="Tice H."/>
            <person name="Bruce D."/>
            <person name="Goodwin L."/>
            <person name="Pitluck S."/>
            <person name="Munk A.C."/>
            <person name="Brettin T."/>
            <person name="Detter J.C."/>
            <person name="Han C."/>
            <person name="Tapia R."/>
            <person name="Schmutz J."/>
            <person name="Larimer F."/>
            <person name="Land M."/>
            <person name="Hauser L."/>
            <person name="Challacombe J.F."/>
            <person name="Green L."/>
            <person name="Lindler L.E."/>
            <person name="Nikolich M.P."/>
            <person name="Richardson P."/>
        </authorList>
    </citation>
    <scope>NUCLEOTIDE SEQUENCE [LARGE SCALE GENOMIC DNA]</scope>
    <source>
        <strain>YPIII</strain>
    </source>
</reference>
<keyword id="KW-0963">Cytoplasm</keyword>
<keyword id="KW-0342">GTP-binding</keyword>
<keyword id="KW-0436">Ligase</keyword>
<keyword id="KW-0460">Magnesium</keyword>
<keyword id="KW-0479">Metal-binding</keyword>
<keyword id="KW-0547">Nucleotide-binding</keyword>
<keyword id="KW-0658">Purine biosynthesis</keyword>
<evidence type="ECO:0000255" key="1">
    <source>
        <dbReference type="HAMAP-Rule" id="MF_00011"/>
    </source>
</evidence>
<organism>
    <name type="scientific">Yersinia pseudotuberculosis serotype O:3 (strain YPIII)</name>
    <dbReference type="NCBI Taxonomy" id="502800"/>
    <lineage>
        <taxon>Bacteria</taxon>
        <taxon>Pseudomonadati</taxon>
        <taxon>Pseudomonadota</taxon>
        <taxon>Gammaproteobacteria</taxon>
        <taxon>Enterobacterales</taxon>
        <taxon>Yersiniaceae</taxon>
        <taxon>Yersinia</taxon>
    </lineage>
</organism>
<dbReference type="EC" id="6.3.4.4" evidence="1"/>
<dbReference type="EMBL" id="CP000950">
    <property type="protein sequence ID" value="ACA70060.1"/>
    <property type="molecule type" value="Genomic_DNA"/>
</dbReference>
<dbReference type="RefSeq" id="WP_002209157.1">
    <property type="nucleotide sequence ID" value="NZ_CP009792.1"/>
</dbReference>
<dbReference type="SMR" id="B1JMN3"/>
<dbReference type="KEGG" id="ypy:YPK_3793"/>
<dbReference type="PATRIC" id="fig|502800.11.peg.142"/>
<dbReference type="UniPathway" id="UPA00075">
    <property type="reaction ID" value="UER00335"/>
</dbReference>
<dbReference type="GO" id="GO:0005737">
    <property type="term" value="C:cytoplasm"/>
    <property type="evidence" value="ECO:0007669"/>
    <property type="project" value="UniProtKB-SubCell"/>
</dbReference>
<dbReference type="GO" id="GO:0004019">
    <property type="term" value="F:adenylosuccinate synthase activity"/>
    <property type="evidence" value="ECO:0007669"/>
    <property type="project" value="UniProtKB-UniRule"/>
</dbReference>
<dbReference type="GO" id="GO:0005525">
    <property type="term" value="F:GTP binding"/>
    <property type="evidence" value="ECO:0007669"/>
    <property type="project" value="UniProtKB-UniRule"/>
</dbReference>
<dbReference type="GO" id="GO:0000287">
    <property type="term" value="F:magnesium ion binding"/>
    <property type="evidence" value="ECO:0007669"/>
    <property type="project" value="UniProtKB-UniRule"/>
</dbReference>
<dbReference type="GO" id="GO:0044208">
    <property type="term" value="P:'de novo' AMP biosynthetic process"/>
    <property type="evidence" value="ECO:0007669"/>
    <property type="project" value="UniProtKB-UniRule"/>
</dbReference>
<dbReference type="GO" id="GO:0046040">
    <property type="term" value="P:IMP metabolic process"/>
    <property type="evidence" value="ECO:0007669"/>
    <property type="project" value="TreeGrafter"/>
</dbReference>
<dbReference type="CDD" id="cd03108">
    <property type="entry name" value="AdSS"/>
    <property type="match status" value="1"/>
</dbReference>
<dbReference type="FunFam" id="1.10.300.10:FF:000001">
    <property type="entry name" value="Adenylosuccinate synthetase"/>
    <property type="match status" value="1"/>
</dbReference>
<dbReference type="FunFam" id="3.90.170.10:FF:000001">
    <property type="entry name" value="Adenylosuccinate synthetase"/>
    <property type="match status" value="1"/>
</dbReference>
<dbReference type="Gene3D" id="3.40.440.10">
    <property type="entry name" value="Adenylosuccinate Synthetase, subunit A, domain 1"/>
    <property type="match status" value="1"/>
</dbReference>
<dbReference type="Gene3D" id="1.10.300.10">
    <property type="entry name" value="Adenylosuccinate Synthetase, subunit A, domain 2"/>
    <property type="match status" value="1"/>
</dbReference>
<dbReference type="Gene3D" id="3.90.170.10">
    <property type="entry name" value="Adenylosuccinate Synthetase, subunit A, domain 3"/>
    <property type="match status" value="1"/>
</dbReference>
<dbReference type="HAMAP" id="MF_00011">
    <property type="entry name" value="Adenylosucc_synth"/>
    <property type="match status" value="1"/>
</dbReference>
<dbReference type="InterPro" id="IPR018220">
    <property type="entry name" value="Adenylosuccin_syn_GTP-bd"/>
</dbReference>
<dbReference type="InterPro" id="IPR033128">
    <property type="entry name" value="Adenylosuccin_syn_Lys_AS"/>
</dbReference>
<dbReference type="InterPro" id="IPR042109">
    <property type="entry name" value="Adenylosuccinate_synth_dom1"/>
</dbReference>
<dbReference type="InterPro" id="IPR042110">
    <property type="entry name" value="Adenylosuccinate_synth_dom2"/>
</dbReference>
<dbReference type="InterPro" id="IPR042111">
    <property type="entry name" value="Adenylosuccinate_synth_dom3"/>
</dbReference>
<dbReference type="InterPro" id="IPR001114">
    <property type="entry name" value="Adenylosuccinate_synthetase"/>
</dbReference>
<dbReference type="InterPro" id="IPR027417">
    <property type="entry name" value="P-loop_NTPase"/>
</dbReference>
<dbReference type="NCBIfam" id="NF002223">
    <property type="entry name" value="PRK01117.1"/>
    <property type="match status" value="1"/>
</dbReference>
<dbReference type="NCBIfam" id="TIGR00184">
    <property type="entry name" value="purA"/>
    <property type="match status" value="1"/>
</dbReference>
<dbReference type="PANTHER" id="PTHR11846">
    <property type="entry name" value="ADENYLOSUCCINATE SYNTHETASE"/>
    <property type="match status" value="1"/>
</dbReference>
<dbReference type="PANTHER" id="PTHR11846:SF0">
    <property type="entry name" value="ADENYLOSUCCINATE SYNTHETASE"/>
    <property type="match status" value="1"/>
</dbReference>
<dbReference type="Pfam" id="PF00709">
    <property type="entry name" value="Adenylsucc_synt"/>
    <property type="match status" value="1"/>
</dbReference>
<dbReference type="SMART" id="SM00788">
    <property type="entry name" value="Adenylsucc_synt"/>
    <property type="match status" value="1"/>
</dbReference>
<dbReference type="SUPFAM" id="SSF52540">
    <property type="entry name" value="P-loop containing nucleoside triphosphate hydrolases"/>
    <property type="match status" value="1"/>
</dbReference>
<dbReference type="PROSITE" id="PS01266">
    <property type="entry name" value="ADENYLOSUCCIN_SYN_1"/>
    <property type="match status" value="1"/>
</dbReference>
<dbReference type="PROSITE" id="PS00513">
    <property type="entry name" value="ADENYLOSUCCIN_SYN_2"/>
    <property type="match status" value="1"/>
</dbReference>